<reference key="1">
    <citation type="journal article" date="2009" name="PLoS ONE">
        <title>Genome sequence of the endosymbiont Rickettsia peacockii and comparison with virulent Rickettsia rickettsii: identification of virulence factors.</title>
        <authorList>
            <person name="Felsheim R.F."/>
            <person name="Kurtti T.J."/>
            <person name="Munderloh U.G."/>
        </authorList>
    </citation>
    <scope>NUCLEOTIDE SEQUENCE [LARGE SCALE GENOMIC DNA]</scope>
    <source>
        <strain>Rustic</strain>
    </source>
</reference>
<feature type="chain" id="PRO_1000213841" description="Alanine racemase">
    <location>
        <begin position="1"/>
        <end position="355"/>
    </location>
</feature>
<feature type="active site" description="Proton acceptor; specific for D-alanine" evidence="1">
    <location>
        <position position="34"/>
    </location>
</feature>
<feature type="active site" description="Proton acceptor; specific for L-alanine" evidence="1">
    <location>
        <position position="249"/>
    </location>
</feature>
<feature type="binding site" evidence="1">
    <location>
        <position position="133"/>
    </location>
    <ligand>
        <name>substrate</name>
    </ligand>
</feature>
<feature type="binding site" evidence="1">
    <location>
        <position position="297"/>
    </location>
    <ligand>
        <name>substrate</name>
    </ligand>
</feature>
<feature type="modified residue" description="N6-(pyridoxal phosphate)lysine" evidence="1">
    <location>
        <position position="34"/>
    </location>
</feature>
<gene>
    <name type="primary">alr</name>
    <name type="ordered locus">RPR_02750</name>
</gene>
<comment type="function">
    <text evidence="1">Catalyzes the interconversion of L-alanine and D-alanine. May also act on other amino acids.</text>
</comment>
<comment type="catalytic activity">
    <reaction evidence="1">
        <text>L-alanine = D-alanine</text>
        <dbReference type="Rhea" id="RHEA:20249"/>
        <dbReference type="ChEBI" id="CHEBI:57416"/>
        <dbReference type="ChEBI" id="CHEBI:57972"/>
        <dbReference type="EC" id="5.1.1.1"/>
    </reaction>
</comment>
<comment type="cofactor">
    <cofactor evidence="1">
        <name>pyridoxal 5'-phosphate</name>
        <dbReference type="ChEBI" id="CHEBI:597326"/>
    </cofactor>
</comment>
<comment type="pathway">
    <text evidence="1">Amino-acid biosynthesis; D-alanine biosynthesis; D-alanine from L-alanine: step 1/1.</text>
</comment>
<comment type="similarity">
    <text evidence="1">Belongs to the alanine racemase family.</text>
</comment>
<accession>C4K1B0</accession>
<organism>
    <name type="scientific">Rickettsia peacockii (strain Rustic)</name>
    <dbReference type="NCBI Taxonomy" id="562019"/>
    <lineage>
        <taxon>Bacteria</taxon>
        <taxon>Pseudomonadati</taxon>
        <taxon>Pseudomonadota</taxon>
        <taxon>Alphaproteobacteria</taxon>
        <taxon>Rickettsiales</taxon>
        <taxon>Rickettsiaceae</taxon>
        <taxon>Rickettsieae</taxon>
        <taxon>Rickettsia</taxon>
        <taxon>spotted fever group</taxon>
    </lineage>
</organism>
<keyword id="KW-0413">Isomerase</keyword>
<keyword id="KW-0663">Pyridoxal phosphate</keyword>
<evidence type="ECO:0000255" key="1">
    <source>
        <dbReference type="HAMAP-Rule" id="MF_01201"/>
    </source>
</evidence>
<proteinExistence type="inferred from homology"/>
<sequence>MSLCTVEINLSTIKNNYLLLQDVCKTSLVGAAVKANGYGLGAVQISKALIEENCRHFFVASSEEGVNLRNALGLDVNILVLNGVFEHDALELIEYNLTPVLNNLKQIEIWQKFSNLKNRLLPCYLHFNTGINRLGLSSDEIEQLINDRDLLKGLDLQYIISHLAISEEIDNPYNLEQLNRFKAYLQYFPNVKASLANSGGIFLGQDYHFDLARPGAALYGLNPLTKNPVTLKAPIIHLQNLTLDSHIGYNMTFTTKRDSVIATLPLGYADGFSRNFSNQGEVFINSRSVPIVGRVSMDLINIDVTDLPPSEIFLGQEAEIIGNYCTPDKIASIIGTIGYEVLTNLGSRYKRKYIG</sequence>
<dbReference type="EC" id="5.1.1.1" evidence="1"/>
<dbReference type="EMBL" id="CP001227">
    <property type="protein sequence ID" value="ACR47361.1"/>
    <property type="molecule type" value="Genomic_DNA"/>
</dbReference>
<dbReference type="RefSeq" id="WP_012736618.1">
    <property type="nucleotide sequence ID" value="NC_012730.1"/>
</dbReference>
<dbReference type="SMR" id="C4K1B0"/>
<dbReference type="KEGG" id="rpk:RPR_02750"/>
<dbReference type="HOGENOM" id="CLU_028393_1_1_5"/>
<dbReference type="UniPathway" id="UPA00042">
    <property type="reaction ID" value="UER00497"/>
</dbReference>
<dbReference type="Proteomes" id="UP000005015">
    <property type="component" value="Chromosome"/>
</dbReference>
<dbReference type="GO" id="GO:0005829">
    <property type="term" value="C:cytosol"/>
    <property type="evidence" value="ECO:0007669"/>
    <property type="project" value="TreeGrafter"/>
</dbReference>
<dbReference type="GO" id="GO:0008784">
    <property type="term" value="F:alanine racemase activity"/>
    <property type="evidence" value="ECO:0007669"/>
    <property type="project" value="UniProtKB-UniRule"/>
</dbReference>
<dbReference type="GO" id="GO:0030170">
    <property type="term" value="F:pyridoxal phosphate binding"/>
    <property type="evidence" value="ECO:0007669"/>
    <property type="project" value="UniProtKB-UniRule"/>
</dbReference>
<dbReference type="GO" id="GO:0030632">
    <property type="term" value="P:D-alanine biosynthetic process"/>
    <property type="evidence" value="ECO:0007669"/>
    <property type="project" value="UniProtKB-UniRule"/>
</dbReference>
<dbReference type="CDD" id="cd00430">
    <property type="entry name" value="PLPDE_III_AR"/>
    <property type="match status" value="1"/>
</dbReference>
<dbReference type="Gene3D" id="3.20.20.10">
    <property type="entry name" value="Alanine racemase"/>
    <property type="match status" value="1"/>
</dbReference>
<dbReference type="Gene3D" id="2.40.37.10">
    <property type="entry name" value="Lyase, Ornithine Decarboxylase, Chain A, domain 1"/>
    <property type="match status" value="1"/>
</dbReference>
<dbReference type="HAMAP" id="MF_01201">
    <property type="entry name" value="Ala_racemase"/>
    <property type="match status" value="1"/>
</dbReference>
<dbReference type="InterPro" id="IPR000821">
    <property type="entry name" value="Ala_racemase"/>
</dbReference>
<dbReference type="InterPro" id="IPR009006">
    <property type="entry name" value="Ala_racemase/Decarboxylase_C"/>
</dbReference>
<dbReference type="InterPro" id="IPR011079">
    <property type="entry name" value="Ala_racemase_C"/>
</dbReference>
<dbReference type="InterPro" id="IPR001608">
    <property type="entry name" value="Ala_racemase_N"/>
</dbReference>
<dbReference type="InterPro" id="IPR020622">
    <property type="entry name" value="Ala_racemase_pyridoxalP-BS"/>
</dbReference>
<dbReference type="InterPro" id="IPR029066">
    <property type="entry name" value="PLP-binding_barrel"/>
</dbReference>
<dbReference type="NCBIfam" id="TIGR00492">
    <property type="entry name" value="alr"/>
    <property type="match status" value="1"/>
</dbReference>
<dbReference type="NCBIfam" id="NF000792">
    <property type="entry name" value="PRK00053.2-3"/>
    <property type="match status" value="1"/>
</dbReference>
<dbReference type="PANTHER" id="PTHR30511">
    <property type="entry name" value="ALANINE RACEMASE"/>
    <property type="match status" value="1"/>
</dbReference>
<dbReference type="PANTHER" id="PTHR30511:SF0">
    <property type="entry name" value="ALANINE RACEMASE, CATABOLIC-RELATED"/>
    <property type="match status" value="1"/>
</dbReference>
<dbReference type="Pfam" id="PF00842">
    <property type="entry name" value="Ala_racemase_C"/>
    <property type="match status" value="1"/>
</dbReference>
<dbReference type="Pfam" id="PF01168">
    <property type="entry name" value="Ala_racemase_N"/>
    <property type="match status" value="1"/>
</dbReference>
<dbReference type="PRINTS" id="PR00992">
    <property type="entry name" value="ALARACEMASE"/>
</dbReference>
<dbReference type="SMART" id="SM01005">
    <property type="entry name" value="Ala_racemase_C"/>
    <property type="match status" value="1"/>
</dbReference>
<dbReference type="SUPFAM" id="SSF50621">
    <property type="entry name" value="Alanine racemase C-terminal domain-like"/>
    <property type="match status" value="1"/>
</dbReference>
<dbReference type="SUPFAM" id="SSF51419">
    <property type="entry name" value="PLP-binding barrel"/>
    <property type="match status" value="1"/>
</dbReference>
<dbReference type="PROSITE" id="PS00395">
    <property type="entry name" value="ALANINE_RACEMASE"/>
    <property type="match status" value="1"/>
</dbReference>
<protein>
    <recommendedName>
        <fullName evidence="1">Alanine racemase</fullName>
        <ecNumber evidence="1">5.1.1.1</ecNumber>
    </recommendedName>
</protein>
<name>ALR_RICPU</name>